<organism>
    <name type="scientific">Danio rerio</name>
    <name type="common">Zebrafish</name>
    <name type="synonym">Brachydanio rerio</name>
    <dbReference type="NCBI Taxonomy" id="7955"/>
    <lineage>
        <taxon>Eukaryota</taxon>
        <taxon>Metazoa</taxon>
        <taxon>Chordata</taxon>
        <taxon>Craniata</taxon>
        <taxon>Vertebrata</taxon>
        <taxon>Euteleostomi</taxon>
        <taxon>Actinopterygii</taxon>
        <taxon>Neopterygii</taxon>
        <taxon>Teleostei</taxon>
        <taxon>Ostariophysi</taxon>
        <taxon>Cypriniformes</taxon>
        <taxon>Danionidae</taxon>
        <taxon>Danioninae</taxon>
        <taxon>Danio</taxon>
    </lineage>
</organism>
<reference key="1">
    <citation type="journal article" date="2004" name="Proc. Natl. Acad. Sci. U.S.A.">
        <title>Identification of 315 genes essential for early zebrafish development.</title>
        <authorList>
            <person name="Amsterdam A."/>
            <person name="Nissen R.M."/>
            <person name="Sun Z."/>
            <person name="Swindell E.C."/>
            <person name="Farrington S."/>
            <person name="Hopkins N."/>
        </authorList>
    </citation>
    <scope>NUCLEOTIDE SEQUENCE [LARGE SCALE MRNA]</scope>
</reference>
<reference key="2">
    <citation type="submission" date="2004-07" db="EMBL/GenBank/DDBJ databases">
        <authorList>
            <consortium name="NIH - Zebrafish Gene Collection (ZGC) project"/>
        </authorList>
    </citation>
    <scope>NUCLEOTIDE SEQUENCE [LARGE SCALE MRNA] OF 1-524</scope>
    <source>
        <tissue>Embryo</tissue>
    </source>
</reference>
<protein>
    <recommendedName>
        <fullName>Guanine nucleotide-binding protein-like 3</fullName>
    </recommendedName>
    <alternativeName>
        <fullName>Nucleostemin-like protein</fullName>
    </alternativeName>
</protein>
<keyword id="KW-0175">Coiled coil</keyword>
<keyword id="KW-0342">GTP-binding</keyword>
<keyword id="KW-0547">Nucleotide-binding</keyword>
<keyword id="KW-0539">Nucleus</keyword>
<keyword id="KW-1185">Reference proteome</keyword>
<accession>Q6DRP2</accession>
<accession>Q6DI18</accession>
<feature type="chain" id="PRO_0000122447" description="Guanine nucleotide-binding protein-like 3">
    <location>
        <begin position="1"/>
        <end position="561"/>
    </location>
</feature>
<feature type="domain" description="CP-type G" evidence="4">
    <location>
        <begin position="133"/>
        <end position="319"/>
    </location>
</feature>
<feature type="region of interest" description="Disordered" evidence="5">
    <location>
        <begin position="28"/>
        <end position="58"/>
    </location>
</feature>
<feature type="region of interest" description="Disordered" evidence="5">
    <location>
        <begin position="76"/>
        <end position="110"/>
    </location>
</feature>
<feature type="region of interest" description="Disordered" evidence="5">
    <location>
        <begin position="486"/>
        <end position="532"/>
    </location>
</feature>
<feature type="coiled-coil region" evidence="3">
    <location>
        <begin position="53"/>
        <end position="98"/>
    </location>
</feature>
<feature type="compositionally biased region" description="Basic residues" evidence="5">
    <location>
        <begin position="28"/>
        <end position="46"/>
    </location>
</feature>
<feature type="compositionally biased region" description="Basic and acidic residues" evidence="5">
    <location>
        <begin position="76"/>
        <end position="88"/>
    </location>
</feature>
<feature type="compositionally biased region" description="Basic and acidic residues" evidence="5">
    <location>
        <begin position="521"/>
        <end position="532"/>
    </location>
</feature>
<feature type="binding site" evidence="3">
    <location>
        <begin position="181"/>
        <end position="184"/>
    </location>
    <ligand>
        <name>GTP</name>
        <dbReference type="ChEBI" id="CHEBI:37565"/>
    </ligand>
</feature>
<feature type="binding site" evidence="3">
    <location>
        <begin position="268"/>
        <end position="275"/>
    </location>
    <ligand>
        <name>GTP</name>
        <dbReference type="ChEBI" id="CHEBI:37565"/>
    </ligand>
</feature>
<feature type="binding site" evidence="3">
    <location>
        <begin position="312"/>
        <end position="315"/>
    </location>
    <ligand>
        <name>GTP</name>
        <dbReference type="ChEBI" id="CHEBI:37565"/>
    </ligand>
</feature>
<feature type="sequence conflict" description="In Ref. 2; AAH75773." evidence="6" ref="2">
    <original>M</original>
    <variation>I</variation>
    <location>
        <position position="166"/>
    </location>
</feature>
<feature type="sequence conflict" description="In Ref. 2; AAH75773." evidence="6" ref="2">
    <original>F</original>
    <variation>Y</variation>
    <location>
        <position position="197"/>
    </location>
</feature>
<feature type="sequence conflict" description="In Ref. 2; AAH75773." evidence="6" ref="2">
    <original>L</original>
    <variation>M</variation>
    <location>
        <position position="281"/>
    </location>
</feature>
<feature type="sequence conflict" description="In Ref. 2; AAH75773." evidence="6" ref="2">
    <original>V</original>
    <variation>I</variation>
    <location>
        <position position="357"/>
    </location>
</feature>
<feature type="sequence conflict" description="In Ref. 2; AAH75773." evidence="6" ref="2">
    <original>H</original>
    <variation>R</variation>
    <location>
        <position position="380"/>
    </location>
</feature>
<feature type="sequence conflict" description="In Ref. 2; AAH75773." evidence="6" ref="2">
    <original>S</original>
    <variation>F</variation>
    <location>
        <position position="421"/>
    </location>
</feature>
<feature type="sequence conflict" description="In Ref. 2; AAH75773." evidence="6" ref="2">
    <original>I</original>
    <variation>T</variation>
    <location>
        <position position="481"/>
    </location>
</feature>
<feature type="sequence conflict" description="In Ref. 2; AAH75773." evidence="6" ref="2">
    <original>A</original>
    <variation>T</variation>
    <location>
        <position position="485"/>
    </location>
</feature>
<feature type="sequence conflict" description="In Ref. 2; AAH75773." evidence="6" ref="2">
    <original>D</original>
    <variation>E</variation>
    <location>
        <position position="497"/>
    </location>
</feature>
<gene>
    <name type="primary">gnl3</name>
</gene>
<comment type="function">
    <text evidence="1">May play a role in regulating cellular proliferation.</text>
</comment>
<comment type="subcellular location">
    <subcellularLocation>
        <location evidence="2">Nucleus</location>
    </subcellularLocation>
    <subcellularLocation>
        <location evidence="2">Nucleus</location>
        <location evidence="2">Nucleolus</location>
    </subcellularLocation>
    <text evidence="2">Shuttles between the nucleus and nucleolus.</text>
</comment>
<comment type="domain">
    <text>In contrast to other GTP-binding proteins, this family is characterized by a circular permutation of the GTPase motifs described by a G4-G1-G3 pattern.</text>
</comment>
<comment type="similarity">
    <text evidence="4">Belongs to the TRAFAC class YlqF/YawG GTPase family.</text>
</comment>
<comment type="sequence caution" evidence="6">
    <conflict type="miscellaneous discrepancy">
        <sequence resource="EMBL-CDS" id="AAH75773"/>
    </conflict>
    <text>Contaminating sequence. Potential poly-A sequence.</text>
</comment>
<dbReference type="EMBL" id="AY648717">
    <property type="protein sequence ID" value="AAT68035.1"/>
    <property type="molecule type" value="mRNA"/>
</dbReference>
<dbReference type="EMBL" id="BC075773">
    <property type="protein sequence ID" value="AAH75773.1"/>
    <property type="status" value="ALT_SEQ"/>
    <property type="molecule type" value="mRNA"/>
</dbReference>
<dbReference type="RefSeq" id="NP_001002297.1">
    <property type="nucleotide sequence ID" value="NM_001002297.1"/>
</dbReference>
<dbReference type="SMR" id="Q6DRP2"/>
<dbReference type="BioGRID" id="80594">
    <property type="interactions" value="1"/>
</dbReference>
<dbReference type="FunCoup" id="Q6DRP2">
    <property type="interactions" value="680"/>
</dbReference>
<dbReference type="STRING" id="7955.ENSDARP00000109517"/>
<dbReference type="PaxDb" id="7955-ENSDARP00000109517"/>
<dbReference type="GeneID" id="321897"/>
<dbReference type="KEGG" id="dre:321897"/>
<dbReference type="AGR" id="ZFIN:ZDB-GENE-030131-616"/>
<dbReference type="CTD" id="26354"/>
<dbReference type="ZFIN" id="ZDB-GENE-030131-616">
    <property type="gene designation" value="gnl3"/>
</dbReference>
<dbReference type="eggNOG" id="KOG2484">
    <property type="taxonomic scope" value="Eukaryota"/>
</dbReference>
<dbReference type="InParanoid" id="Q6DRP2"/>
<dbReference type="OrthoDB" id="444945at2759"/>
<dbReference type="PhylomeDB" id="Q6DRP2"/>
<dbReference type="PRO" id="PR:Q6DRP2"/>
<dbReference type="Proteomes" id="UP000000437">
    <property type="component" value="Chromosome 11"/>
</dbReference>
<dbReference type="GO" id="GO:0005730">
    <property type="term" value="C:nucleolus"/>
    <property type="evidence" value="ECO:0000250"/>
    <property type="project" value="UniProtKB"/>
</dbReference>
<dbReference type="GO" id="GO:0005634">
    <property type="term" value="C:nucleus"/>
    <property type="evidence" value="ECO:0000250"/>
    <property type="project" value="UniProtKB"/>
</dbReference>
<dbReference type="GO" id="GO:0005525">
    <property type="term" value="F:GTP binding"/>
    <property type="evidence" value="ECO:0000250"/>
    <property type="project" value="UniProtKB"/>
</dbReference>
<dbReference type="GO" id="GO:0000467">
    <property type="term" value="P:exonucleolytic trimming to generate mature 3'-end of 5.8S rRNA from tricistronic rRNA transcript (SSU-rRNA, 5.8S rRNA, LSU-rRNA)"/>
    <property type="evidence" value="ECO:0000315"/>
    <property type="project" value="ZFIN"/>
</dbReference>
<dbReference type="GO" id="GO:0003407">
    <property type="term" value="P:neural retina development"/>
    <property type="evidence" value="ECO:0000315"/>
    <property type="project" value="ZFIN"/>
</dbReference>
<dbReference type="GO" id="GO:0042127">
    <property type="term" value="P:regulation of cell population proliferation"/>
    <property type="evidence" value="ECO:0000250"/>
    <property type="project" value="UniProtKB"/>
</dbReference>
<dbReference type="GO" id="GO:0007096">
    <property type="term" value="P:regulation of exit from mitosis"/>
    <property type="evidence" value="ECO:0000315"/>
    <property type="project" value="ZFIN"/>
</dbReference>
<dbReference type="GO" id="GO:0045664">
    <property type="term" value="P:regulation of neuron differentiation"/>
    <property type="evidence" value="ECO:0000315"/>
    <property type="project" value="ZFIN"/>
</dbReference>
<dbReference type="CDD" id="cd04178">
    <property type="entry name" value="Nucleostemin_like"/>
    <property type="match status" value="1"/>
</dbReference>
<dbReference type="FunFam" id="1.10.1580.10:FF:000002">
    <property type="entry name" value="Guanine nucleotide-binding protein-like 3 (nucleolar)-like"/>
    <property type="match status" value="1"/>
</dbReference>
<dbReference type="FunFam" id="3.40.50.300:FF:000493">
    <property type="entry name" value="Guanine nucleotide-binding protein-like 3-like protein"/>
    <property type="match status" value="1"/>
</dbReference>
<dbReference type="Gene3D" id="1.10.1580.10">
    <property type="match status" value="1"/>
</dbReference>
<dbReference type="Gene3D" id="3.40.50.300">
    <property type="entry name" value="P-loop containing nucleotide triphosphate hydrolases"/>
    <property type="match status" value="1"/>
</dbReference>
<dbReference type="InterPro" id="IPR030378">
    <property type="entry name" value="G_CP_dom"/>
</dbReference>
<dbReference type="InterPro" id="IPR014813">
    <property type="entry name" value="Gnl3_N_dom"/>
</dbReference>
<dbReference type="InterPro" id="IPR006073">
    <property type="entry name" value="GTP-bd"/>
</dbReference>
<dbReference type="InterPro" id="IPR023179">
    <property type="entry name" value="GTP-bd_ortho_bundle_sf"/>
</dbReference>
<dbReference type="InterPro" id="IPR027417">
    <property type="entry name" value="P-loop_NTPase"/>
</dbReference>
<dbReference type="InterPro" id="IPR050755">
    <property type="entry name" value="TRAFAC_YlqF/YawG_RiboMat"/>
</dbReference>
<dbReference type="PANTHER" id="PTHR11089">
    <property type="entry name" value="GTP-BINDING PROTEIN-RELATED"/>
    <property type="match status" value="1"/>
</dbReference>
<dbReference type="PANTHER" id="PTHR11089:SF11">
    <property type="entry name" value="GUANINE NUCLEOTIDE-BINDING PROTEIN-LIKE 3"/>
    <property type="match status" value="1"/>
</dbReference>
<dbReference type="Pfam" id="PF08701">
    <property type="entry name" value="GN3L_Grn1"/>
    <property type="match status" value="1"/>
</dbReference>
<dbReference type="Pfam" id="PF01926">
    <property type="entry name" value="MMR_HSR1"/>
    <property type="match status" value="1"/>
</dbReference>
<dbReference type="PRINTS" id="PR00326">
    <property type="entry name" value="GTP1OBG"/>
</dbReference>
<dbReference type="SUPFAM" id="SSF52540">
    <property type="entry name" value="P-loop containing nucleoside triphosphate hydrolases"/>
    <property type="match status" value="1"/>
</dbReference>
<dbReference type="PROSITE" id="PS51721">
    <property type="entry name" value="G_CP"/>
    <property type="match status" value="1"/>
</dbReference>
<name>GNL3_DANRE</name>
<proteinExistence type="evidence at transcript level"/>
<evidence type="ECO:0000250" key="1"/>
<evidence type="ECO:0000250" key="2">
    <source>
        <dbReference type="UniProtKB" id="Q811S9"/>
    </source>
</evidence>
<evidence type="ECO:0000255" key="3"/>
<evidence type="ECO:0000255" key="4">
    <source>
        <dbReference type="PROSITE-ProRule" id="PRU01058"/>
    </source>
</evidence>
<evidence type="ECO:0000256" key="5">
    <source>
        <dbReference type="SAM" id="MobiDB-lite"/>
    </source>
</evidence>
<evidence type="ECO:0000305" key="6"/>
<sequence length="561" mass="62901">MKRPKLKKASKRLSCAKRYKIQKKVREHNRKLKKAAKKQGISRKAKKDIGVPNSAPFKEEVLREAEQRKQELETLKEQNKIVKQQEKAAKRKKEKDAASSVKEPAAKKAKKAAKIKEARAAIVKVKSAKTFKCQELNKVIEASDVIVEVLDARDPLGCRCPQLEEMVLKHEGKKKLLFILNKIDLVPKDNLEKWLHFLEAECPTFLFKSSMQLKDRTVQQKRQQRGTNAVLDHSRAASCFGKDFLLQTLNDLANKKEGETMLKVGVVGFPNVGKSSIINSLKEMRACNAGVQRGLTRCMQEVHITKKVKMIDSPGILAALSNPGSAMALRSLQVEEKEESPQEAVRNLLKQCNQQHVMLQYNVPDYRSSLEFLTTFAMKHGLLQKGGVADTELAATTFLNDWTGAKLSYYSRVPERQGLPSYLSDAIVTELQSDVDMDAVKKGNENVKRSVRFPNLASCISFDSSGPTAGVLDVSELPKEILTKAATTTDAEEEKMDTTTNTDEPEAESHISSTVEPIQEPTEKRKDKPAKEVKFVPVNTDLTSMQNKNNEDAYDFNTDFV</sequence>